<keyword id="KW-0574">Periplasm</keyword>
<keyword id="KW-0732">Signal</keyword>
<dbReference type="EMBL" id="CP001120">
    <property type="protein sequence ID" value="ACF69114.1"/>
    <property type="molecule type" value="Genomic_DNA"/>
</dbReference>
<dbReference type="RefSeq" id="WP_000739886.1">
    <property type="nucleotide sequence ID" value="NC_011083.1"/>
</dbReference>
<dbReference type="SMR" id="B4TES8"/>
<dbReference type="KEGG" id="seh:SeHA_C1268"/>
<dbReference type="HOGENOM" id="CLU_071003_1_2_6"/>
<dbReference type="Proteomes" id="UP000001866">
    <property type="component" value="Chromosome"/>
</dbReference>
<dbReference type="GO" id="GO:0042597">
    <property type="term" value="C:periplasmic space"/>
    <property type="evidence" value="ECO:0007669"/>
    <property type="project" value="UniProtKB-SubCell"/>
</dbReference>
<dbReference type="Gene3D" id="2.40.128.110">
    <property type="entry name" value="Lipid/polyisoprenoid-binding, YceI-like"/>
    <property type="match status" value="1"/>
</dbReference>
<dbReference type="HAMAP" id="MF_00780">
    <property type="entry name" value="UPF0312"/>
    <property type="match status" value="1"/>
</dbReference>
<dbReference type="InterPro" id="IPR007372">
    <property type="entry name" value="Lipid/polyisoprenoid-bd_YceI"/>
</dbReference>
<dbReference type="InterPro" id="IPR036761">
    <property type="entry name" value="TTHA0802/YceI-like_sf"/>
</dbReference>
<dbReference type="InterPro" id="IPR023480">
    <property type="entry name" value="UPF0312/YceI"/>
</dbReference>
<dbReference type="NCBIfam" id="NF002994">
    <property type="entry name" value="PRK03757.1"/>
    <property type="match status" value="1"/>
</dbReference>
<dbReference type="PANTHER" id="PTHR34406">
    <property type="entry name" value="PROTEIN YCEI"/>
    <property type="match status" value="1"/>
</dbReference>
<dbReference type="PANTHER" id="PTHR34406:SF1">
    <property type="entry name" value="PROTEIN YCEI"/>
    <property type="match status" value="1"/>
</dbReference>
<dbReference type="Pfam" id="PF04264">
    <property type="entry name" value="YceI"/>
    <property type="match status" value="1"/>
</dbReference>
<dbReference type="SMART" id="SM00867">
    <property type="entry name" value="YceI"/>
    <property type="match status" value="1"/>
</dbReference>
<dbReference type="SUPFAM" id="SSF101874">
    <property type="entry name" value="YceI-like"/>
    <property type="match status" value="1"/>
</dbReference>
<proteinExistence type="inferred from homology"/>
<organism>
    <name type="scientific">Salmonella heidelberg (strain SL476)</name>
    <dbReference type="NCBI Taxonomy" id="454169"/>
    <lineage>
        <taxon>Bacteria</taxon>
        <taxon>Pseudomonadati</taxon>
        <taxon>Pseudomonadota</taxon>
        <taxon>Gammaproteobacteria</taxon>
        <taxon>Enterobacterales</taxon>
        <taxon>Enterobacteriaceae</taxon>
        <taxon>Salmonella</taxon>
    </lineage>
</organism>
<gene>
    <name evidence="1" type="primary">yceI</name>
    <name type="ordered locus">SeHA_C1268</name>
</gene>
<name>YCEI_SALHS</name>
<reference key="1">
    <citation type="journal article" date="2011" name="J. Bacteriol.">
        <title>Comparative genomics of 28 Salmonella enterica isolates: evidence for CRISPR-mediated adaptive sublineage evolution.</title>
        <authorList>
            <person name="Fricke W.F."/>
            <person name="Mammel M.K."/>
            <person name="McDermott P.F."/>
            <person name="Tartera C."/>
            <person name="White D.G."/>
            <person name="Leclerc J.E."/>
            <person name="Ravel J."/>
            <person name="Cebula T.A."/>
        </authorList>
    </citation>
    <scope>NUCLEOTIDE SEQUENCE [LARGE SCALE GENOMIC DNA]</scope>
    <source>
        <strain>SL476</strain>
    </source>
</reference>
<comment type="subcellular location">
    <subcellularLocation>
        <location evidence="1">Periplasm</location>
    </subcellularLocation>
</comment>
<comment type="similarity">
    <text evidence="1">Belongs to the UPF0312 family. Type 1 subfamily.</text>
</comment>
<accession>B4TES8</accession>
<evidence type="ECO:0000255" key="1">
    <source>
        <dbReference type="HAMAP-Rule" id="MF_00780"/>
    </source>
</evidence>
<protein>
    <recommendedName>
        <fullName evidence="1">Protein YceI</fullName>
    </recommendedName>
</protein>
<feature type="signal peptide" evidence="1">
    <location>
        <begin position="1"/>
        <end position="22"/>
    </location>
</feature>
<feature type="chain" id="PRO_1000200478" description="Protein YceI">
    <location>
        <begin position="23"/>
        <end position="191"/>
    </location>
</feature>
<sequence length="191" mass="21023">MKKNLLGFTLASLLFTTGSAVAAEYKIDKEGQHAFVNFRIQHLGYSWLYGTFKDFDGTFTFDEKNPSADKVNVTINTNSVDTNHAERDKHLRSAEFLNVAKFPQATFTSTSVKKEGDELDITGNLTLNGVTKPVTLEAKLMGQGDDPWGGKRAGFEAEGKIKLKDFNITTDLGPASQEVELIISVEGVQQK</sequence>